<protein>
    <recommendedName>
        <fullName evidence="1">Small ribosomal subunit protein uS15</fullName>
    </recommendedName>
    <alternativeName>
        <fullName evidence="3">30S ribosomal protein S15</fullName>
    </alternativeName>
</protein>
<accession>B1KWK2</accession>
<sequence length="87" mass="10276">MDKAKKQELMAKHARHEGDTGSPEVQIALLTERINHLNSHLKEHKKDHHSRRGLLMMVGKRRGLLNYLMREDIERYRAIIKELGLRK</sequence>
<organism>
    <name type="scientific">Clostridium botulinum (strain Loch Maree / Type A3)</name>
    <dbReference type="NCBI Taxonomy" id="498214"/>
    <lineage>
        <taxon>Bacteria</taxon>
        <taxon>Bacillati</taxon>
        <taxon>Bacillota</taxon>
        <taxon>Clostridia</taxon>
        <taxon>Eubacteriales</taxon>
        <taxon>Clostridiaceae</taxon>
        <taxon>Clostridium</taxon>
    </lineage>
</organism>
<comment type="function">
    <text evidence="1">One of the primary rRNA binding proteins, it binds directly to 16S rRNA where it helps nucleate assembly of the platform of the 30S subunit by binding and bridging several RNA helices of the 16S rRNA.</text>
</comment>
<comment type="function">
    <text evidence="1">Forms an intersubunit bridge (bridge B4) with the 23S rRNA of the 50S subunit in the ribosome.</text>
</comment>
<comment type="subunit">
    <text evidence="1">Part of the 30S ribosomal subunit. Forms a bridge to the 50S subunit in the 70S ribosome, contacting the 23S rRNA.</text>
</comment>
<comment type="similarity">
    <text evidence="1">Belongs to the universal ribosomal protein uS15 family.</text>
</comment>
<comment type="sequence caution" evidence="3">
    <conflict type="erroneous initiation">
        <sequence resource="EMBL-CDS" id="ACA55644"/>
    </conflict>
</comment>
<name>RS15_CLOBM</name>
<reference key="1">
    <citation type="journal article" date="2007" name="PLoS ONE">
        <title>Analysis of the neurotoxin complex genes in Clostridium botulinum A1-A4 and B1 strains: BoNT/A3, /Ba4 and /B1 clusters are located within plasmids.</title>
        <authorList>
            <person name="Smith T.J."/>
            <person name="Hill K.K."/>
            <person name="Foley B.T."/>
            <person name="Detter J.C."/>
            <person name="Munk A.C."/>
            <person name="Bruce D.C."/>
            <person name="Doggett N.A."/>
            <person name="Smith L.A."/>
            <person name="Marks J.D."/>
            <person name="Xie G."/>
            <person name="Brettin T.S."/>
        </authorList>
    </citation>
    <scope>NUCLEOTIDE SEQUENCE [LARGE SCALE GENOMIC DNA]</scope>
    <source>
        <strain>Loch Maree / Type A3</strain>
    </source>
</reference>
<keyword id="KW-0687">Ribonucleoprotein</keyword>
<keyword id="KW-0689">Ribosomal protein</keyword>
<keyword id="KW-0694">RNA-binding</keyword>
<keyword id="KW-0699">rRNA-binding</keyword>
<dbReference type="EMBL" id="CP000962">
    <property type="protein sequence ID" value="ACA55644.1"/>
    <property type="status" value="ALT_INIT"/>
    <property type="molecule type" value="Genomic_DNA"/>
</dbReference>
<dbReference type="RefSeq" id="WP_003388351.1">
    <property type="nucleotide sequence ID" value="NC_010520.1"/>
</dbReference>
<dbReference type="SMR" id="B1KWK2"/>
<dbReference type="GeneID" id="92939166"/>
<dbReference type="KEGG" id="cbl:CLK_1789"/>
<dbReference type="HOGENOM" id="CLU_148518_0_1_9"/>
<dbReference type="GO" id="GO:0022627">
    <property type="term" value="C:cytosolic small ribosomal subunit"/>
    <property type="evidence" value="ECO:0007669"/>
    <property type="project" value="TreeGrafter"/>
</dbReference>
<dbReference type="GO" id="GO:0019843">
    <property type="term" value="F:rRNA binding"/>
    <property type="evidence" value="ECO:0007669"/>
    <property type="project" value="UniProtKB-UniRule"/>
</dbReference>
<dbReference type="GO" id="GO:0003735">
    <property type="term" value="F:structural constituent of ribosome"/>
    <property type="evidence" value="ECO:0007669"/>
    <property type="project" value="InterPro"/>
</dbReference>
<dbReference type="GO" id="GO:0006412">
    <property type="term" value="P:translation"/>
    <property type="evidence" value="ECO:0007669"/>
    <property type="project" value="UniProtKB-UniRule"/>
</dbReference>
<dbReference type="CDD" id="cd00353">
    <property type="entry name" value="Ribosomal_S15p_S13e"/>
    <property type="match status" value="1"/>
</dbReference>
<dbReference type="FunFam" id="1.10.287.10:FF:000002">
    <property type="entry name" value="30S ribosomal protein S15"/>
    <property type="match status" value="1"/>
</dbReference>
<dbReference type="Gene3D" id="6.10.250.3130">
    <property type="match status" value="1"/>
</dbReference>
<dbReference type="Gene3D" id="1.10.287.10">
    <property type="entry name" value="S15/NS1, RNA-binding"/>
    <property type="match status" value="1"/>
</dbReference>
<dbReference type="HAMAP" id="MF_01343_B">
    <property type="entry name" value="Ribosomal_uS15_B"/>
    <property type="match status" value="1"/>
</dbReference>
<dbReference type="InterPro" id="IPR000589">
    <property type="entry name" value="Ribosomal_uS15"/>
</dbReference>
<dbReference type="InterPro" id="IPR005290">
    <property type="entry name" value="Ribosomal_uS15_bac-type"/>
</dbReference>
<dbReference type="InterPro" id="IPR009068">
    <property type="entry name" value="uS15_NS1_RNA-bd_sf"/>
</dbReference>
<dbReference type="NCBIfam" id="TIGR00952">
    <property type="entry name" value="S15_bact"/>
    <property type="match status" value="1"/>
</dbReference>
<dbReference type="PANTHER" id="PTHR23321">
    <property type="entry name" value="RIBOSOMAL PROTEIN S15, BACTERIAL AND ORGANELLAR"/>
    <property type="match status" value="1"/>
</dbReference>
<dbReference type="PANTHER" id="PTHR23321:SF26">
    <property type="entry name" value="SMALL RIBOSOMAL SUBUNIT PROTEIN US15M"/>
    <property type="match status" value="1"/>
</dbReference>
<dbReference type="Pfam" id="PF00312">
    <property type="entry name" value="Ribosomal_S15"/>
    <property type="match status" value="1"/>
</dbReference>
<dbReference type="SMART" id="SM01387">
    <property type="entry name" value="Ribosomal_S15"/>
    <property type="match status" value="1"/>
</dbReference>
<dbReference type="SUPFAM" id="SSF47060">
    <property type="entry name" value="S15/NS1 RNA-binding domain"/>
    <property type="match status" value="1"/>
</dbReference>
<dbReference type="PROSITE" id="PS00362">
    <property type="entry name" value="RIBOSOMAL_S15"/>
    <property type="match status" value="1"/>
</dbReference>
<evidence type="ECO:0000255" key="1">
    <source>
        <dbReference type="HAMAP-Rule" id="MF_01343"/>
    </source>
</evidence>
<evidence type="ECO:0000256" key="2">
    <source>
        <dbReference type="SAM" id="MobiDB-lite"/>
    </source>
</evidence>
<evidence type="ECO:0000305" key="3"/>
<feature type="chain" id="PRO_0000354187" description="Small ribosomal subunit protein uS15">
    <location>
        <begin position="1"/>
        <end position="87"/>
    </location>
</feature>
<feature type="region of interest" description="Disordered" evidence="2">
    <location>
        <begin position="1"/>
        <end position="23"/>
    </location>
</feature>
<feature type="compositionally biased region" description="Basic and acidic residues" evidence="2">
    <location>
        <begin position="1"/>
        <end position="19"/>
    </location>
</feature>
<proteinExistence type="inferred from homology"/>
<gene>
    <name evidence="1" type="primary">rpsO</name>
    <name type="ordered locus">CLK_1789</name>
</gene>